<proteinExistence type="inferred from homology"/>
<protein>
    <recommendedName>
        <fullName evidence="1">4-hydroxy-3-methylbut-2-enyl diphosphate reductase</fullName>
        <shortName evidence="1">HMBPP reductase</shortName>
        <ecNumber evidence="1">1.17.7.4</ecNumber>
    </recommendedName>
</protein>
<keyword id="KW-0004">4Fe-4S</keyword>
<keyword id="KW-0408">Iron</keyword>
<keyword id="KW-0411">Iron-sulfur</keyword>
<keyword id="KW-0414">Isoprene biosynthesis</keyword>
<keyword id="KW-0479">Metal-binding</keyword>
<keyword id="KW-0560">Oxidoreductase</keyword>
<keyword id="KW-1185">Reference proteome</keyword>
<organism>
    <name type="scientific">Chromobacterium violaceum (strain ATCC 12472 / DSM 30191 / JCM 1249 / CCUG 213 / NBRC 12614 / NCIMB 9131 / NCTC 9757 / MK)</name>
    <dbReference type="NCBI Taxonomy" id="243365"/>
    <lineage>
        <taxon>Bacteria</taxon>
        <taxon>Pseudomonadati</taxon>
        <taxon>Pseudomonadota</taxon>
        <taxon>Betaproteobacteria</taxon>
        <taxon>Neisseriales</taxon>
        <taxon>Chromobacteriaceae</taxon>
        <taxon>Chromobacterium</taxon>
    </lineage>
</organism>
<name>ISPH_CHRVO</name>
<feature type="chain" id="PRO_0000128804" description="4-hydroxy-3-methylbut-2-enyl diphosphate reductase">
    <location>
        <begin position="1"/>
        <end position="311"/>
    </location>
</feature>
<feature type="active site" description="Proton donor" evidence="1">
    <location>
        <position position="128"/>
    </location>
</feature>
<feature type="binding site" evidence="1">
    <location>
        <position position="14"/>
    </location>
    <ligand>
        <name>[4Fe-4S] cluster</name>
        <dbReference type="ChEBI" id="CHEBI:49883"/>
    </ligand>
</feature>
<feature type="binding site" evidence="1">
    <location>
        <position position="43"/>
    </location>
    <ligand>
        <name>(2E)-4-hydroxy-3-methylbut-2-enyl diphosphate</name>
        <dbReference type="ChEBI" id="CHEBI:128753"/>
    </ligand>
</feature>
<feature type="binding site" evidence="1">
    <location>
        <position position="43"/>
    </location>
    <ligand>
        <name>dimethylallyl diphosphate</name>
        <dbReference type="ChEBI" id="CHEBI:57623"/>
    </ligand>
</feature>
<feature type="binding site" evidence="1">
    <location>
        <position position="43"/>
    </location>
    <ligand>
        <name>isopentenyl diphosphate</name>
        <dbReference type="ChEBI" id="CHEBI:128769"/>
    </ligand>
</feature>
<feature type="binding site" evidence="1">
    <location>
        <position position="76"/>
    </location>
    <ligand>
        <name>(2E)-4-hydroxy-3-methylbut-2-enyl diphosphate</name>
        <dbReference type="ChEBI" id="CHEBI:128753"/>
    </ligand>
</feature>
<feature type="binding site" evidence="1">
    <location>
        <position position="76"/>
    </location>
    <ligand>
        <name>dimethylallyl diphosphate</name>
        <dbReference type="ChEBI" id="CHEBI:57623"/>
    </ligand>
</feature>
<feature type="binding site" evidence="1">
    <location>
        <position position="76"/>
    </location>
    <ligand>
        <name>isopentenyl diphosphate</name>
        <dbReference type="ChEBI" id="CHEBI:128769"/>
    </ligand>
</feature>
<feature type="binding site" evidence="1">
    <location>
        <position position="98"/>
    </location>
    <ligand>
        <name>[4Fe-4S] cluster</name>
        <dbReference type="ChEBI" id="CHEBI:49883"/>
    </ligand>
</feature>
<feature type="binding site" evidence="1">
    <location>
        <position position="126"/>
    </location>
    <ligand>
        <name>(2E)-4-hydroxy-3-methylbut-2-enyl diphosphate</name>
        <dbReference type="ChEBI" id="CHEBI:128753"/>
    </ligand>
</feature>
<feature type="binding site" evidence="1">
    <location>
        <position position="126"/>
    </location>
    <ligand>
        <name>dimethylallyl diphosphate</name>
        <dbReference type="ChEBI" id="CHEBI:57623"/>
    </ligand>
</feature>
<feature type="binding site" evidence="1">
    <location>
        <position position="126"/>
    </location>
    <ligand>
        <name>isopentenyl diphosphate</name>
        <dbReference type="ChEBI" id="CHEBI:128769"/>
    </ligand>
</feature>
<feature type="binding site" evidence="1">
    <location>
        <position position="166"/>
    </location>
    <ligand>
        <name>(2E)-4-hydroxy-3-methylbut-2-enyl diphosphate</name>
        <dbReference type="ChEBI" id="CHEBI:128753"/>
    </ligand>
</feature>
<feature type="binding site" evidence="1">
    <location>
        <position position="196"/>
    </location>
    <ligand>
        <name>[4Fe-4S] cluster</name>
        <dbReference type="ChEBI" id="CHEBI:49883"/>
    </ligand>
</feature>
<feature type="binding site" evidence="1">
    <location>
        <position position="224"/>
    </location>
    <ligand>
        <name>(2E)-4-hydroxy-3-methylbut-2-enyl diphosphate</name>
        <dbReference type="ChEBI" id="CHEBI:128753"/>
    </ligand>
</feature>
<feature type="binding site" evidence="1">
    <location>
        <position position="224"/>
    </location>
    <ligand>
        <name>dimethylallyl diphosphate</name>
        <dbReference type="ChEBI" id="CHEBI:57623"/>
    </ligand>
</feature>
<feature type="binding site" evidence="1">
    <location>
        <position position="224"/>
    </location>
    <ligand>
        <name>isopentenyl diphosphate</name>
        <dbReference type="ChEBI" id="CHEBI:128769"/>
    </ligand>
</feature>
<feature type="binding site" evidence="1">
    <location>
        <position position="225"/>
    </location>
    <ligand>
        <name>(2E)-4-hydroxy-3-methylbut-2-enyl diphosphate</name>
        <dbReference type="ChEBI" id="CHEBI:128753"/>
    </ligand>
</feature>
<feature type="binding site" evidence="1">
    <location>
        <position position="225"/>
    </location>
    <ligand>
        <name>dimethylallyl diphosphate</name>
        <dbReference type="ChEBI" id="CHEBI:57623"/>
    </ligand>
</feature>
<feature type="binding site" evidence="1">
    <location>
        <position position="225"/>
    </location>
    <ligand>
        <name>isopentenyl diphosphate</name>
        <dbReference type="ChEBI" id="CHEBI:128769"/>
    </ligand>
</feature>
<feature type="binding site" evidence="1">
    <location>
        <position position="226"/>
    </location>
    <ligand>
        <name>(2E)-4-hydroxy-3-methylbut-2-enyl diphosphate</name>
        <dbReference type="ChEBI" id="CHEBI:128753"/>
    </ligand>
</feature>
<feature type="binding site" evidence="1">
    <location>
        <position position="226"/>
    </location>
    <ligand>
        <name>dimethylallyl diphosphate</name>
        <dbReference type="ChEBI" id="CHEBI:57623"/>
    </ligand>
</feature>
<feature type="binding site" evidence="1">
    <location>
        <position position="226"/>
    </location>
    <ligand>
        <name>isopentenyl diphosphate</name>
        <dbReference type="ChEBI" id="CHEBI:128769"/>
    </ligand>
</feature>
<feature type="binding site" evidence="1">
    <location>
        <position position="268"/>
    </location>
    <ligand>
        <name>(2E)-4-hydroxy-3-methylbut-2-enyl diphosphate</name>
        <dbReference type="ChEBI" id="CHEBI:128753"/>
    </ligand>
</feature>
<feature type="binding site" evidence="1">
    <location>
        <position position="268"/>
    </location>
    <ligand>
        <name>dimethylallyl diphosphate</name>
        <dbReference type="ChEBI" id="CHEBI:57623"/>
    </ligand>
</feature>
<feature type="binding site" evidence="1">
    <location>
        <position position="268"/>
    </location>
    <ligand>
        <name>isopentenyl diphosphate</name>
        <dbReference type="ChEBI" id="CHEBI:128769"/>
    </ligand>
</feature>
<evidence type="ECO:0000255" key="1">
    <source>
        <dbReference type="HAMAP-Rule" id="MF_00191"/>
    </source>
</evidence>
<reference key="1">
    <citation type="journal article" date="2003" name="Proc. Natl. Acad. Sci. U.S.A.">
        <title>The complete genome sequence of Chromobacterium violaceum reveals remarkable and exploitable bacterial adaptability.</title>
        <authorList>
            <person name="Vasconcelos A.T.R."/>
            <person name="de Almeida D.F."/>
            <person name="Hungria M."/>
            <person name="Guimaraes C.T."/>
            <person name="Antonio R.V."/>
            <person name="Almeida F.C."/>
            <person name="de Almeida L.G.P."/>
            <person name="de Almeida R."/>
            <person name="Alves-Gomes J.A."/>
            <person name="Andrade E.M."/>
            <person name="Araripe J."/>
            <person name="de Araujo M.F.F."/>
            <person name="Astolfi-Filho S."/>
            <person name="Azevedo V."/>
            <person name="Baptista A.J."/>
            <person name="Bataus L.A.M."/>
            <person name="Batista J.S."/>
            <person name="Belo A."/>
            <person name="van den Berg C."/>
            <person name="Bogo M."/>
            <person name="Bonatto S."/>
            <person name="Bordignon J."/>
            <person name="Brigido M.M."/>
            <person name="Brito C.A."/>
            <person name="Brocchi M."/>
            <person name="Burity H.A."/>
            <person name="Camargo A.A."/>
            <person name="Cardoso D.D.P."/>
            <person name="Carneiro N.P."/>
            <person name="Carraro D.M."/>
            <person name="Carvalho C.M.B."/>
            <person name="Cascardo J.C.M."/>
            <person name="Cavada B.S."/>
            <person name="Chueire L.M.O."/>
            <person name="Creczynski-Pasa T.B."/>
            <person name="Cunha-Junior N.C."/>
            <person name="Fagundes N."/>
            <person name="Falcao C.L."/>
            <person name="Fantinatti F."/>
            <person name="Farias I.P."/>
            <person name="Felipe M.S.S."/>
            <person name="Ferrari L.P."/>
            <person name="Ferro J.A."/>
            <person name="Ferro M.I.T."/>
            <person name="Franco G.R."/>
            <person name="Freitas N.S.A."/>
            <person name="Furlan L.R."/>
            <person name="Gazzinelli R.T."/>
            <person name="Gomes E.A."/>
            <person name="Goncalves P.R."/>
            <person name="Grangeiro T.B."/>
            <person name="Grattapaglia D."/>
            <person name="Grisard E.C."/>
            <person name="Hanna E.S."/>
            <person name="Jardim S.N."/>
            <person name="Laurino J."/>
            <person name="Leoi L.C.T."/>
            <person name="Lima L.F.A."/>
            <person name="Loureiro M.F."/>
            <person name="Lyra M.C.C.P."/>
            <person name="Madeira H.M.F."/>
            <person name="Manfio G.P."/>
            <person name="Maranhao A.Q."/>
            <person name="Martins W.S."/>
            <person name="di Mauro S.M.Z."/>
            <person name="de Medeiros S.R.B."/>
            <person name="Meissner R.V."/>
            <person name="Moreira M.A.M."/>
            <person name="Nascimento F.F."/>
            <person name="Nicolas M.F."/>
            <person name="Oliveira J.G."/>
            <person name="Oliveira S.C."/>
            <person name="Paixao R.F.C."/>
            <person name="Parente J.A."/>
            <person name="Pedrosa F.O."/>
            <person name="Pena S.D.J."/>
            <person name="Pereira J.O."/>
            <person name="Pereira M."/>
            <person name="Pinto L.S.R.C."/>
            <person name="Pinto L.S."/>
            <person name="Porto J.I.R."/>
            <person name="Potrich D.P."/>
            <person name="Ramalho-Neto C.E."/>
            <person name="Reis A.M.M."/>
            <person name="Rigo L.U."/>
            <person name="Rondinelli E."/>
            <person name="Santos E.B.P."/>
            <person name="Santos F.R."/>
            <person name="Schneider M.P.C."/>
            <person name="Seuanez H.N."/>
            <person name="Silva A.M.R."/>
            <person name="da Silva A.L.C."/>
            <person name="Silva D.W."/>
            <person name="Silva R."/>
            <person name="Simoes I.C."/>
            <person name="Simon D."/>
            <person name="Soares C.M.A."/>
            <person name="Soares R.B.A."/>
            <person name="Souza E.M."/>
            <person name="Souza K.R.L."/>
            <person name="Souza R.C."/>
            <person name="Steffens M.B.R."/>
            <person name="Steindel M."/>
            <person name="Teixeira S.R."/>
            <person name="Urmenyi T."/>
            <person name="Vettore A."/>
            <person name="Wassem R."/>
            <person name="Zaha A."/>
            <person name="Simpson A.J.G."/>
        </authorList>
    </citation>
    <scope>NUCLEOTIDE SEQUENCE [LARGE SCALE GENOMIC DNA]</scope>
    <source>
        <strain>ATCC 12472 / DSM 30191 / JCM 1249 / CCUG 213 / NBRC 12614 / NCIMB 9131 / NCTC 9757 / MK</strain>
    </source>
</reference>
<comment type="function">
    <text evidence="1">Catalyzes the conversion of 1-hydroxy-2-methyl-2-(E)-butenyl 4-diphosphate (HMBPP) into a mixture of isopentenyl diphosphate (IPP) and dimethylallyl diphosphate (DMAPP). Acts in the terminal step of the DOXP/MEP pathway for isoprenoid precursor biosynthesis.</text>
</comment>
<comment type="catalytic activity">
    <reaction evidence="1">
        <text>isopentenyl diphosphate + 2 oxidized [2Fe-2S]-[ferredoxin] + H2O = (2E)-4-hydroxy-3-methylbut-2-enyl diphosphate + 2 reduced [2Fe-2S]-[ferredoxin] + 2 H(+)</text>
        <dbReference type="Rhea" id="RHEA:24488"/>
        <dbReference type="Rhea" id="RHEA-COMP:10000"/>
        <dbReference type="Rhea" id="RHEA-COMP:10001"/>
        <dbReference type="ChEBI" id="CHEBI:15377"/>
        <dbReference type="ChEBI" id="CHEBI:15378"/>
        <dbReference type="ChEBI" id="CHEBI:33737"/>
        <dbReference type="ChEBI" id="CHEBI:33738"/>
        <dbReference type="ChEBI" id="CHEBI:128753"/>
        <dbReference type="ChEBI" id="CHEBI:128769"/>
        <dbReference type="EC" id="1.17.7.4"/>
    </reaction>
</comment>
<comment type="catalytic activity">
    <reaction evidence="1">
        <text>dimethylallyl diphosphate + 2 oxidized [2Fe-2S]-[ferredoxin] + H2O = (2E)-4-hydroxy-3-methylbut-2-enyl diphosphate + 2 reduced [2Fe-2S]-[ferredoxin] + 2 H(+)</text>
        <dbReference type="Rhea" id="RHEA:24825"/>
        <dbReference type="Rhea" id="RHEA-COMP:10000"/>
        <dbReference type="Rhea" id="RHEA-COMP:10001"/>
        <dbReference type="ChEBI" id="CHEBI:15377"/>
        <dbReference type="ChEBI" id="CHEBI:15378"/>
        <dbReference type="ChEBI" id="CHEBI:33737"/>
        <dbReference type="ChEBI" id="CHEBI:33738"/>
        <dbReference type="ChEBI" id="CHEBI:57623"/>
        <dbReference type="ChEBI" id="CHEBI:128753"/>
        <dbReference type="EC" id="1.17.7.4"/>
    </reaction>
</comment>
<comment type="cofactor">
    <cofactor evidence="1">
        <name>[4Fe-4S] cluster</name>
        <dbReference type="ChEBI" id="CHEBI:49883"/>
    </cofactor>
    <text evidence="1">Binds 1 [4Fe-4S] cluster per subunit.</text>
</comment>
<comment type="pathway">
    <text evidence="1">Isoprenoid biosynthesis; dimethylallyl diphosphate biosynthesis; dimethylallyl diphosphate from (2E)-4-hydroxy-3-methylbutenyl diphosphate: step 1/1.</text>
</comment>
<comment type="pathway">
    <text evidence="1">Isoprenoid biosynthesis; isopentenyl diphosphate biosynthesis via DXP pathway; isopentenyl diphosphate from 1-deoxy-D-xylulose 5-phosphate: step 6/6.</text>
</comment>
<comment type="similarity">
    <text evidence="1">Belongs to the IspH family.</text>
</comment>
<sequence>MTKTIMLANPRGFCAGVDRAIAIVERAIELYGAPIYVRHEVVHNRFVVDDLRGKGAVFIEELKDVPPGSTLIYSAHGVPLSVRAEAEALGLTVFDATCPLVTKVHVEVKRMNKAGMEIIMIGHAGHPEVEGTMGQVDAGIYLVQTVDDVATLRVVNEDQLSYVSQTTLSVDETRDIIAALKARFPNIHSPKKDDICYATQNRQDAVKLLADQCDIVVVVGSPNSSNSNRLREVAALKGVDAYMVDNASLLEPEWFAGKRRVGVTAGASAPEVLVQAVIDRIKAFDVTQVTELPGVEESTVFALPPALRPLF</sequence>
<accession>Q7NS59</accession>
<gene>
    <name evidence="1" type="primary">ispH</name>
    <name type="synonym">lytB</name>
    <name type="ordered locus">CV_3567</name>
</gene>
<dbReference type="EC" id="1.17.7.4" evidence="1"/>
<dbReference type="EMBL" id="AE016825">
    <property type="protein sequence ID" value="AAQ61229.1"/>
    <property type="molecule type" value="Genomic_DNA"/>
</dbReference>
<dbReference type="RefSeq" id="WP_011137114.1">
    <property type="nucleotide sequence ID" value="NC_005085.1"/>
</dbReference>
<dbReference type="SMR" id="Q7NS59"/>
<dbReference type="STRING" id="243365.CV_3567"/>
<dbReference type="KEGG" id="cvi:CV_3567"/>
<dbReference type="eggNOG" id="COG0761">
    <property type="taxonomic scope" value="Bacteria"/>
</dbReference>
<dbReference type="HOGENOM" id="CLU_027486_1_0_4"/>
<dbReference type="OrthoDB" id="9804068at2"/>
<dbReference type="UniPathway" id="UPA00056">
    <property type="reaction ID" value="UER00097"/>
</dbReference>
<dbReference type="UniPathway" id="UPA00059">
    <property type="reaction ID" value="UER00105"/>
</dbReference>
<dbReference type="Proteomes" id="UP000001424">
    <property type="component" value="Chromosome"/>
</dbReference>
<dbReference type="GO" id="GO:0051539">
    <property type="term" value="F:4 iron, 4 sulfur cluster binding"/>
    <property type="evidence" value="ECO:0007669"/>
    <property type="project" value="UniProtKB-UniRule"/>
</dbReference>
<dbReference type="GO" id="GO:0051745">
    <property type="term" value="F:4-hydroxy-3-methylbut-2-enyl diphosphate reductase activity"/>
    <property type="evidence" value="ECO:0007669"/>
    <property type="project" value="UniProtKB-UniRule"/>
</dbReference>
<dbReference type="GO" id="GO:0046872">
    <property type="term" value="F:metal ion binding"/>
    <property type="evidence" value="ECO:0007669"/>
    <property type="project" value="UniProtKB-KW"/>
</dbReference>
<dbReference type="GO" id="GO:0050992">
    <property type="term" value="P:dimethylallyl diphosphate biosynthetic process"/>
    <property type="evidence" value="ECO:0007669"/>
    <property type="project" value="UniProtKB-UniRule"/>
</dbReference>
<dbReference type="GO" id="GO:0019288">
    <property type="term" value="P:isopentenyl diphosphate biosynthetic process, methylerythritol 4-phosphate pathway"/>
    <property type="evidence" value="ECO:0007669"/>
    <property type="project" value="UniProtKB-UniRule"/>
</dbReference>
<dbReference type="GO" id="GO:0016114">
    <property type="term" value="P:terpenoid biosynthetic process"/>
    <property type="evidence" value="ECO:0007669"/>
    <property type="project" value="UniProtKB-UniRule"/>
</dbReference>
<dbReference type="CDD" id="cd13944">
    <property type="entry name" value="lytB_ispH"/>
    <property type="match status" value="1"/>
</dbReference>
<dbReference type="Gene3D" id="3.40.50.11270">
    <property type="match status" value="1"/>
</dbReference>
<dbReference type="Gene3D" id="3.40.1010.20">
    <property type="entry name" value="4-hydroxy-3-methylbut-2-enyl diphosphate reductase, catalytic domain"/>
    <property type="match status" value="2"/>
</dbReference>
<dbReference type="HAMAP" id="MF_00191">
    <property type="entry name" value="IspH"/>
    <property type="match status" value="1"/>
</dbReference>
<dbReference type="InterPro" id="IPR003451">
    <property type="entry name" value="LytB/IspH"/>
</dbReference>
<dbReference type="NCBIfam" id="TIGR00216">
    <property type="entry name" value="ispH_lytB"/>
    <property type="match status" value="1"/>
</dbReference>
<dbReference type="NCBIfam" id="NF002188">
    <property type="entry name" value="PRK01045.1-2"/>
    <property type="match status" value="1"/>
</dbReference>
<dbReference type="NCBIfam" id="NF002190">
    <property type="entry name" value="PRK01045.1-4"/>
    <property type="match status" value="1"/>
</dbReference>
<dbReference type="PANTHER" id="PTHR30426">
    <property type="entry name" value="4-HYDROXY-3-METHYLBUT-2-ENYL DIPHOSPHATE REDUCTASE"/>
    <property type="match status" value="1"/>
</dbReference>
<dbReference type="PANTHER" id="PTHR30426:SF0">
    <property type="entry name" value="4-HYDROXY-3-METHYLBUT-2-ENYL DIPHOSPHATE REDUCTASE"/>
    <property type="match status" value="1"/>
</dbReference>
<dbReference type="Pfam" id="PF02401">
    <property type="entry name" value="LYTB"/>
    <property type="match status" value="1"/>
</dbReference>